<accession>Q10135</accession>
<accession>Q9USA2</accession>
<protein>
    <recommendedName>
        <fullName>Lysine-specific histone demethylase 2</fullName>
        <ecNumber>1.-.-.-</ecNumber>
    </recommendedName>
</protein>
<feature type="chain" id="PRO_0000116463" description="Lysine-specific histone demethylase 2">
    <location>
        <begin position="1"/>
        <end position="1273"/>
    </location>
</feature>
<feature type="domain" description="SWIRM" evidence="3">
    <location>
        <begin position="394"/>
        <end position="490"/>
    </location>
</feature>
<feature type="DNA-binding region" description="HMG box" evidence="4">
    <location>
        <begin position="1115"/>
        <end position="1195"/>
    </location>
</feature>
<feature type="region of interest" description="Disordered" evidence="5">
    <location>
        <begin position="199"/>
        <end position="237"/>
    </location>
</feature>
<feature type="region of interest" description="Demethylase activity" evidence="1">
    <location>
        <begin position="542"/>
        <end position="1198"/>
    </location>
</feature>
<feature type="region of interest" description="Disordered" evidence="5">
    <location>
        <begin position="571"/>
        <end position="596"/>
    </location>
</feature>
<feature type="region of interest" description="Disordered" evidence="5">
    <location>
        <begin position="1215"/>
        <end position="1273"/>
    </location>
</feature>
<feature type="coiled-coil region" evidence="2">
    <location>
        <begin position="247"/>
        <end position="307"/>
    </location>
</feature>
<feature type="coiled-coil region" evidence="2">
    <location>
        <begin position="681"/>
        <end position="767"/>
    </location>
</feature>
<feature type="compositionally biased region" description="Polar residues" evidence="5">
    <location>
        <begin position="199"/>
        <end position="230"/>
    </location>
</feature>
<feature type="compositionally biased region" description="Low complexity" evidence="5">
    <location>
        <begin position="574"/>
        <end position="590"/>
    </location>
</feature>
<feature type="compositionally biased region" description="Basic and acidic residues" evidence="5">
    <location>
        <begin position="1233"/>
        <end position="1253"/>
    </location>
</feature>
<feature type="compositionally biased region" description="Polar residues" evidence="5">
    <location>
        <begin position="1264"/>
        <end position="1273"/>
    </location>
</feature>
<feature type="binding site" evidence="2">
    <location>
        <begin position="509"/>
        <end position="551"/>
    </location>
    <ligand>
        <name>FAD</name>
        <dbReference type="ChEBI" id="CHEBI:57692"/>
    </ligand>
</feature>
<feature type="binding site" evidence="1">
    <location>
        <position position="517"/>
    </location>
    <ligand>
        <name>FAD</name>
        <dbReference type="ChEBI" id="CHEBI:57692"/>
    </ligand>
</feature>
<feature type="binding site" evidence="1">
    <location>
        <position position="550"/>
    </location>
    <ligand>
        <name>FAD</name>
        <dbReference type="ChEBI" id="CHEBI:57692"/>
    </ligand>
</feature>
<feature type="binding site" evidence="1">
    <location>
        <position position="558"/>
    </location>
    <ligand>
        <name>FAD</name>
        <dbReference type="ChEBI" id="CHEBI:57692"/>
    </ligand>
</feature>
<feature type="binding site" evidence="1">
    <location>
        <begin position="572"/>
        <end position="573"/>
    </location>
    <ligand>
        <name>FAD</name>
        <dbReference type="ChEBI" id="CHEBI:57692"/>
    </ligand>
</feature>
<feature type="binding site" evidence="1">
    <location>
        <position position="1147"/>
    </location>
    <ligand>
        <name>FAD</name>
        <dbReference type="ChEBI" id="CHEBI:57692"/>
    </ligand>
</feature>
<feature type="binding site" evidence="1">
    <location>
        <begin position="1156"/>
        <end position="1157"/>
    </location>
    <ligand>
        <name>FAD</name>
        <dbReference type="ChEBI" id="CHEBI:57692"/>
    </ligand>
</feature>
<feature type="sequence conflict" description="In Ref. 2; BAA87224." evidence="11" ref="2">
    <original>S</original>
    <variation>P</variation>
    <location>
        <position position="248"/>
    </location>
</feature>
<name>LSD2_SCHPO</name>
<dbReference type="EC" id="1.-.-.-"/>
<dbReference type="EMBL" id="CU329670">
    <property type="protein sequence ID" value="CAA93114.1"/>
    <property type="molecule type" value="Genomic_DNA"/>
</dbReference>
<dbReference type="EMBL" id="AB027920">
    <property type="protein sequence ID" value="BAA87224.1"/>
    <property type="molecule type" value="Genomic_DNA"/>
</dbReference>
<dbReference type="PIR" id="T38292">
    <property type="entry name" value="T38292"/>
</dbReference>
<dbReference type="RefSeq" id="NP_592937.1">
    <property type="nucleotide sequence ID" value="NM_001018338.2"/>
</dbReference>
<dbReference type="SMR" id="Q10135"/>
<dbReference type="BioGRID" id="278323">
    <property type="interactions" value="11"/>
</dbReference>
<dbReference type="ComplexPortal" id="CPX-10327">
    <property type="entry name" value="SWM histone demethylase complex"/>
</dbReference>
<dbReference type="FunCoup" id="Q10135">
    <property type="interactions" value="374"/>
</dbReference>
<dbReference type="STRING" id="284812.Q10135"/>
<dbReference type="iPTMnet" id="Q10135"/>
<dbReference type="PaxDb" id="4896-SPAC23E2.02.1"/>
<dbReference type="EnsemblFungi" id="SPAC23E2.02.1">
    <property type="protein sequence ID" value="SPAC23E2.02.1:pep"/>
    <property type="gene ID" value="SPAC23E2.02"/>
</dbReference>
<dbReference type="GeneID" id="2541832"/>
<dbReference type="KEGG" id="spo:2541832"/>
<dbReference type="PomBase" id="SPAC23E2.02">
    <property type="gene designation" value="lsd2"/>
</dbReference>
<dbReference type="VEuPathDB" id="FungiDB:SPAC23E2.02"/>
<dbReference type="eggNOG" id="KOG0029">
    <property type="taxonomic scope" value="Eukaryota"/>
</dbReference>
<dbReference type="HOGENOM" id="CLU_274764_0_0_1"/>
<dbReference type="InParanoid" id="Q10135"/>
<dbReference type="OMA" id="WCAENPF"/>
<dbReference type="PhylomeDB" id="Q10135"/>
<dbReference type="BRENDA" id="1.14.11.65">
    <property type="organism ID" value="5613"/>
</dbReference>
<dbReference type="PRO" id="PR:Q10135"/>
<dbReference type="Proteomes" id="UP000002485">
    <property type="component" value="Chromosome I"/>
</dbReference>
<dbReference type="GO" id="GO:0000785">
    <property type="term" value="C:chromatin"/>
    <property type="evidence" value="ECO:0000314"/>
    <property type="project" value="PomBase"/>
</dbReference>
<dbReference type="GO" id="GO:0005829">
    <property type="term" value="C:cytosol"/>
    <property type="evidence" value="ECO:0007005"/>
    <property type="project" value="PomBase"/>
</dbReference>
<dbReference type="GO" id="GO:0033193">
    <property type="term" value="C:Lsd1/2 complex"/>
    <property type="evidence" value="ECO:0000314"/>
    <property type="project" value="PomBase"/>
</dbReference>
<dbReference type="GO" id="GO:0031934">
    <property type="term" value="C:mating-type region heterochromatin"/>
    <property type="evidence" value="ECO:0000314"/>
    <property type="project" value="PomBase"/>
</dbReference>
<dbReference type="GO" id="GO:0005634">
    <property type="term" value="C:nucleus"/>
    <property type="evidence" value="ECO:0007005"/>
    <property type="project" value="PomBase"/>
</dbReference>
<dbReference type="GO" id="GO:0005721">
    <property type="term" value="C:pericentric heterochromatin"/>
    <property type="evidence" value="ECO:0000314"/>
    <property type="project" value="PomBase"/>
</dbReference>
<dbReference type="GO" id="GO:0140720">
    <property type="term" value="C:subtelomeric heterochromatin"/>
    <property type="evidence" value="ECO:0000314"/>
    <property type="project" value="PomBase"/>
</dbReference>
<dbReference type="GO" id="GO:0003677">
    <property type="term" value="F:DNA binding"/>
    <property type="evidence" value="ECO:0000255"/>
    <property type="project" value="PomBase"/>
</dbReference>
<dbReference type="GO" id="GO:0140683">
    <property type="term" value="F:histone H3K9me/H3K9me2 demethylase activity"/>
    <property type="evidence" value="ECO:0000314"/>
    <property type="project" value="PomBase"/>
</dbReference>
<dbReference type="GO" id="GO:0016491">
    <property type="term" value="F:oxidoreductase activity"/>
    <property type="evidence" value="ECO:0000318"/>
    <property type="project" value="GO_Central"/>
</dbReference>
<dbReference type="GO" id="GO:1990841">
    <property type="term" value="F:promoter-specific chromatin binding"/>
    <property type="evidence" value="ECO:0000269"/>
    <property type="project" value="PomBase"/>
</dbReference>
<dbReference type="GO" id="GO:0006338">
    <property type="term" value="P:chromatin remodeling"/>
    <property type="evidence" value="ECO:0000353"/>
    <property type="project" value="PomBase"/>
</dbReference>
<dbReference type="GO" id="GO:0140718">
    <property type="term" value="P:facultative heterochromatin formation"/>
    <property type="evidence" value="ECO:0000269"/>
    <property type="project" value="PomBase"/>
</dbReference>
<dbReference type="GO" id="GO:0033696">
    <property type="term" value="P:heterochromatin boundary formation"/>
    <property type="evidence" value="ECO:0000353"/>
    <property type="project" value="PomBase"/>
</dbReference>
<dbReference type="GO" id="GO:0071515">
    <property type="term" value="P:mating-type locus imprinting"/>
    <property type="evidence" value="ECO:0000316"/>
    <property type="project" value="PomBase"/>
</dbReference>
<dbReference type="GO" id="GO:0031508">
    <property type="term" value="P:pericentric heterochromatin formation"/>
    <property type="evidence" value="ECO:0000315"/>
    <property type="project" value="PomBase"/>
</dbReference>
<dbReference type="GO" id="GO:0045893">
    <property type="term" value="P:positive regulation of DNA-templated transcription"/>
    <property type="evidence" value="ECO:0007669"/>
    <property type="project" value="GOC"/>
</dbReference>
<dbReference type="GO" id="GO:0030466">
    <property type="term" value="P:silent mating-type cassette heterochromatin formation"/>
    <property type="evidence" value="ECO:0000315"/>
    <property type="project" value="PomBase"/>
</dbReference>
<dbReference type="GO" id="GO:0031509">
    <property type="term" value="P:subtelomeric heterochromatin formation"/>
    <property type="evidence" value="ECO:0000316"/>
    <property type="project" value="PomBase"/>
</dbReference>
<dbReference type="FunFam" id="3.50.50.60:FF:001005">
    <property type="entry name" value="Lysine-specific histone demethylase 2"/>
    <property type="match status" value="1"/>
</dbReference>
<dbReference type="FunFam" id="1.10.30.10:FF:000067">
    <property type="entry name" value="Lysine-specific histone demethylase Aof2, putative"/>
    <property type="match status" value="1"/>
</dbReference>
<dbReference type="Gene3D" id="3.90.660.10">
    <property type="match status" value="1"/>
</dbReference>
<dbReference type="Gene3D" id="3.50.50.60">
    <property type="entry name" value="FAD/NAD(P)-binding domain"/>
    <property type="match status" value="2"/>
</dbReference>
<dbReference type="Gene3D" id="1.10.30.10">
    <property type="entry name" value="High mobility group box domain"/>
    <property type="match status" value="1"/>
</dbReference>
<dbReference type="Gene3D" id="1.10.10.10">
    <property type="entry name" value="Winged helix-like DNA-binding domain superfamily/Winged helix DNA-binding domain"/>
    <property type="match status" value="1"/>
</dbReference>
<dbReference type="InterPro" id="IPR002937">
    <property type="entry name" value="Amino_oxidase"/>
</dbReference>
<dbReference type="InterPro" id="IPR036188">
    <property type="entry name" value="FAD/NAD-bd_sf"/>
</dbReference>
<dbReference type="InterPro" id="IPR050281">
    <property type="entry name" value="Flavin_monoamine_oxidase"/>
</dbReference>
<dbReference type="InterPro" id="IPR009071">
    <property type="entry name" value="HMG_box_dom"/>
</dbReference>
<dbReference type="InterPro" id="IPR036910">
    <property type="entry name" value="HMG_box_dom_sf"/>
</dbReference>
<dbReference type="InterPro" id="IPR009057">
    <property type="entry name" value="Homeodomain-like_sf"/>
</dbReference>
<dbReference type="InterPro" id="IPR007526">
    <property type="entry name" value="SWIRM"/>
</dbReference>
<dbReference type="InterPro" id="IPR036388">
    <property type="entry name" value="WH-like_DNA-bd_sf"/>
</dbReference>
<dbReference type="PANTHER" id="PTHR10742">
    <property type="entry name" value="FLAVIN MONOAMINE OXIDASE"/>
    <property type="match status" value="1"/>
</dbReference>
<dbReference type="PANTHER" id="PTHR10742:SF410">
    <property type="entry name" value="LYSINE-SPECIFIC HISTONE DEMETHYLASE 2"/>
    <property type="match status" value="1"/>
</dbReference>
<dbReference type="Pfam" id="PF01593">
    <property type="entry name" value="Amino_oxidase"/>
    <property type="match status" value="1"/>
</dbReference>
<dbReference type="Pfam" id="PF04433">
    <property type="entry name" value="SWIRM"/>
    <property type="match status" value="1"/>
</dbReference>
<dbReference type="SUPFAM" id="SSF51905">
    <property type="entry name" value="FAD/NAD(P)-binding domain"/>
    <property type="match status" value="1"/>
</dbReference>
<dbReference type="SUPFAM" id="SSF47095">
    <property type="entry name" value="HMG-box"/>
    <property type="match status" value="1"/>
</dbReference>
<dbReference type="SUPFAM" id="SSF46689">
    <property type="entry name" value="Homeodomain-like"/>
    <property type="match status" value="1"/>
</dbReference>
<dbReference type="PROSITE" id="PS50118">
    <property type="entry name" value="HMG_BOX_2"/>
    <property type="match status" value="1"/>
</dbReference>
<dbReference type="PROSITE" id="PS50934">
    <property type="entry name" value="SWIRM"/>
    <property type="match status" value="1"/>
</dbReference>
<comment type="function">
    <text evidence="8 9 10">Catalytic component of the SWM histone demethylase complex that specifically demethylates H3K9me2, a specific tag for epigenetic transcriptional activation, thereby acting as a corepressor. Acts by oxidizing the substrate by FAD to generate the corresponding imine that is subsequently hydrolyzed. Has a role in regulating heterochromatin propagation and euchromatic transcription. Also has a gene activating role.</text>
</comment>
<comment type="cofactor">
    <cofactor>
        <name>FAD</name>
        <dbReference type="ChEBI" id="CHEBI:57692"/>
    </cofactor>
</comment>
<comment type="subunit">
    <text evidence="8 9 10">Component of the SWM histone demethylase complex composed of at least lsd1, lsd2, phf1 and phf2. Interacts directly with lsd1.</text>
</comment>
<comment type="subcellular location">
    <subcellularLocation>
        <location evidence="4 6 7 8">Nucleus</location>
    </subcellularLocation>
</comment>
<comment type="similarity">
    <text evidence="11">Belongs to the flavin monoamine oxidase family.</text>
</comment>
<organism>
    <name type="scientific">Schizosaccharomyces pombe (strain 972 / ATCC 24843)</name>
    <name type="common">Fission yeast</name>
    <dbReference type="NCBI Taxonomy" id="284812"/>
    <lineage>
        <taxon>Eukaryota</taxon>
        <taxon>Fungi</taxon>
        <taxon>Dikarya</taxon>
        <taxon>Ascomycota</taxon>
        <taxon>Taphrinomycotina</taxon>
        <taxon>Schizosaccharomycetes</taxon>
        <taxon>Schizosaccharomycetales</taxon>
        <taxon>Schizosaccharomycetaceae</taxon>
        <taxon>Schizosaccharomyces</taxon>
    </lineage>
</organism>
<keyword id="KW-0156">Chromatin regulator</keyword>
<keyword id="KW-0175">Coiled coil</keyword>
<keyword id="KW-0238">DNA-binding</keyword>
<keyword id="KW-0274">FAD</keyword>
<keyword id="KW-0285">Flavoprotein</keyword>
<keyword id="KW-0539">Nucleus</keyword>
<keyword id="KW-0560">Oxidoreductase</keyword>
<keyword id="KW-1185">Reference proteome</keyword>
<keyword id="KW-0678">Repressor</keyword>
<keyword id="KW-0804">Transcription</keyword>
<keyword id="KW-0805">Transcription regulation</keyword>
<evidence type="ECO:0000250" key="1"/>
<evidence type="ECO:0000255" key="2"/>
<evidence type="ECO:0000255" key="3">
    <source>
        <dbReference type="PROSITE-ProRule" id="PRU00247"/>
    </source>
</evidence>
<evidence type="ECO:0000255" key="4">
    <source>
        <dbReference type="PROSITE-ProRule" id="PRU00267"/>
    </source>
</evidence>
<evidence type="ECO:0000256" key="5">
    <source>
        <dbReference type="SAM" id="MobiDB-lite"/>
    </source>
</evidence>
<evidence type="ECO:0000269" key="6">
    <source>
    </source>
</evidence>
<evidence type="ECO:0000269" key="7">
    <source>
    </source>
</evidence>
<evidence type="ECO:0000269" key="8">
    <source>
    </source>
</evidence>
<evidence type="ECO:0000269" key="9">
    <source>
    </source>
</evidence>
<evidence type="ECO:0000269" key="10">
    <source>
    </source>
</evidence>
<evidence type="ECO:0000305" key="11"/>
<sequence length="1273" mass="142490">MPLGRSSWICCAKYFVNTKSRFNEILPPRFTLIVSFYSMNTSENDPDGHYDFPEMTEHHSDRASSYANANNVNSTQPQLVSSEQALLAILGGGLQSITPNSVNQNAYSRSTYRTDGGLNSQPVSSLNNQWGNYNPAFLPSRYDSSFHPYTISQAANQPFPQHLLGNSNAGVAQQSGMRTIGLPPTVGSSFPQQKSSTYENFFDANSPSSQQFPSTYPSRSQNPLSSSGDGSTAIHAGPIQHQNSNAFSNYPYPLDASHLSSQQLLSMYRDQVSHGVTPSTFRNHESFMPTQLVSATELSKSVDNAVLPIPPTTAPAVVSPPASSFPLMSSAATSGNISSPALFDSELGARPEGSVAIEPSRVLLQWSSQSSSHTIPSAGASIPTSSLKSFFEHAAEAARKCNLDPRALESFEQHMLSDRLHDPVVLFHYFQIRNSICWLWIKNPTHAISRVEAQGVCVDRCLFQLASLAYEFLVRYGYINYGCLSFDSSFTNETNTGTTSSSASKQKTIAVVGAGLTGLICARQLTGLFSQYSSSFLSKNELPPKVIILEAKERTGGRIYSRALPVSHTSATQINHHTSNSNSISSNSTSLNPKDVTDPSHIPSAIDLGFQFLFSPMDDILLNLLNKQLGIEVTEMTGSDLVYDETDTKVLDMVEVKKLNILWEKLLEYVSVCFFINVEESVRISWISQFQLFIDEMFPDHLSKSLSLNASHEFSFKKTMLILIDEVSSYAKLGNSQKKFLIWCFKVAELDDTLYPLNTVDTDFSKDILIPKVARRGLSQLPWALQSYPSPLNIHYEKFVSKVTIENDKCTLDCKDNSSYEVDQVVIACSPSHFSSNIEFSPGLPNFVTENIKSIDFKPGKKVILRYAAAFWRKNIRSFGIIPKSLSQEMNNDENDGKSCFVLRIWNMLPETGVPILVADINPQMTSSSSNETSHLIQELHSLIVDHFQNDSNSSADLLDAWVTNWSRNGVYDGLNSYPNFANDKQQYEKRFRQSQLSYNLGRLHIAGDYIFSCVGCRTLQRSFLSGLSVCTGIIDSLAPISLTIPIIGETSRKELDQFLRNSKVNNFDPNAEAQRHLSYQARYRLKKQERLDEHKEEQEQLVTELLGYLPEPPSKPNANPFLLYQKMQWHVCRALADEDKRRLTGDSTAKATINETRAKLGKTWRQLDDLGKKPWIDEIAAQREAYAGKILRYQRLTKEYEMRAEQIRNDYAAKCQDEPIPDDEARLFMQAQREEEQRKQTQDDNISKSREASDEEYHDDGSSDSGYNGTRY</sequence>
<proteinExistence type="evidence at protein level"/>
<gene>
    <name type="primary">lsd2</name>
    <name type="synonym">saf140</name>
    <name type="synonym">swm2</name>
    <name type="ORF">SPAC23E2.02</name>
</gene>
<reference key="1">
    <citation type="journal article" date="2002" name="Nature">
        <title>The genome sequence of Schizosaccharomyces pombe.</title>
        <authorList>
            <person name="Wood V."/>
            <person name="Gwilliam R."/>
            <person name="Rajandream M.A."/>
            <person name="Lyne M.H."/>
            <person name="Lyne R."/>
            <person name="Stewart A."/>
            <person name="Sgouros J.G."/>
            <person name="Peat N."/>
            <person name="Hayles J."/>
            <person name="Baker S.G."/>
            <person name="Basham D."/>
            <person name="Bowman S."/>
            <person name="Brooks K."/>
            <person name="Brown D."/>
            <person name="Brown S."/>
            <person name="Chillingworth T."/>
            <person name="Churcher C.M."/>
            <person name="Collins M."/>
            <person name="Connor R."/>
            <person name="Cronin A."/>
            <person name="Davis P."/>
            <person name="Feltwell T."/>
            <person name="Fraser A."/>
            <person name="Gentles S."/>
            <person name="Goble A."/>
            <person name="Hamlin N."/>
            <person name="Harris D.E."/>
            <person name="Hidalgo J."/>
            <person name="Hodgson G."/>
            <person name="Holroyd S."/>
            <person name="Hornsby T."/>
            <person name="Howarth S."/>
            <person name="Huckle E.J."/>
            <person name="Hunt S."/>
            <person name="Jagels K."/>
            <person name="James K.D."/>
            <person name="Jones L."/>
            <person name="Jones M."/>
            <person name="Leather S."/>
            <person name="McDonald S."/>
            <person name="McLean J."/>
            <person name="Mooney P."/>
            <person name="Moule S."/>
            <person name="Mungall K.L."/>
            <person name="Murphy L.D."/>
            <person name="Niblett D."/>
            <person name="Odell C."/>
            <person name="Oliver K."/>
            <person name="O'Neil S."/>
            <person name="Pearson D."/>
            <person name="Quail M.A."/>
            <person name="Rabbinowitsch E."/>
            <person name="Rutherford K.M."/>
            <person name="Rutter S."/>
            <person name="Saunders D."/>
            <person name="Seeger K."/>
            <person name="Sharp S."/>
            <person name="Skelton J."/>
            <person name="Simmonds M.N."/>
            <person name="Squares R."/>
            <person name="Squares S."/>
            <person name="Stevens K."/>
            <person name="Taylor K."/>
            <person name="Taylor R.G."/>
            <person name="Tivey A."/>
            <person name="Walsh S.V."/>
            <person name="Warren T."/>
            <person name="Whitehead S."/>
            <person name="Woodward J.R."/>
            <person name="Volckaert G."/>
            <person name="Aert R."/>
            <person name="Robben J."/>
            <person name="Grymonprez B."/>
            <person name="Weltjens I."/>
            <person name="Vanstreels E."/>
            <person name="Rieger M."/>
            <person name="Schaefer M."/>
            <person name="Mueller-Auer S."/>
            <person name="Gabel C."/>
            <person name="Fuchs M."/>
            <person name="Duesterhoeft A."/>
            <person name="Fritzc C."/>
            <person name="Holzer E."/>
            <person name="Moestl D."/>
            <person name="Hilbert H."/>
            <person name="Borzym K."/>
            <person name="Langer I."/>
            <person name="Beck A."/>
            <person name="Lehrach H."/>
            <person name="Reinhardt R."/>
            <person name="Pohl T.M."/>
            <person name="Eger P."/>
            <person name="Zimmermann W."/>
            <person name="Wedler H."/>
            <person name="Wambutt R."/>
            <person name="Purnelle B."/>
            <person name="Goffeau A."/>
            <person name="Cadieu E."/>
            <person name="Dreano S."/>
            <person name="Gloux S."/>
            <person name="Lelaure V."/>
            <person name="Mottier S."/>
            <person name="Galibert F."/>
            <person name="Aves S.J."/>
            <person name="Xiang Z."/>
            <person name="Hunt C."/>
            <person name="Moore K."/>
            <person name="Hurst S.M."/>
            <person name="Lucas M."/>
            <person name="Rochet M."/>
            <person name="Gaillardin C."/>
            <person name="Tallada V.A."/>
            <person name="Garzon A."/>
            <person name="Thode G."/>
            <person name="Daga R.R."/>
            <person name="Cruzado L."/>
            <person name="Jimenez J."/>
            <person name="Sanchez M."/>
            <person name="del Rey F."/>
            <person name="Benito J."/>
            <person name="Dominguez A."/>
            <person name="Revuelta J.L."/>
            <person name="Moreno S."/>
            <person name="Armstrong J."/>
            <person name="Forsburg S.L."/>
            <person name="Cerutti L."/>
            <person name="Lowe T."/>
            <person name="McCombie W.R."/>
            <person name="Paulsen I."/>
            <person name="Potashkin J."/>
            <person name="Shpakovski G.V."/>
            <person name="Ussery D."/>
            <person name="Barrell B.G."/>
            <person name="Nurse P."/>
        </authorList>
    </citation>
    <scope>NUCLEOTIDE SEQUENCE [LARGE SCALE GENOMIC DNA]</scope>
    <source>
        <strain>972 / ATCC 24843</strain>
    </source>
</reference>
<reference key="2">
    <citation type="journal article" date="2000" name="Genes Cells">
        <title>Large-scale screening of intracellular protein localization in living fission yeast cells by the use of a GFP-fusion genomic DNA library.</title>
        <authorList>
            <person name="Ding D.-Q."/>
            <person name="Tomita Y."/>
            <person name="Yamamoto A."/>
            <person name="Chikashige Y."/>
            <person name="Haraguchi T."/>
            <person name="Hiraoka Y."/>
        </authorList>
    </citation>
    <scope>NUCLEOTIDE SEQUENCE [LARGE SCALE GENOMIC DNA] OF 201-404</scope>
    <scope>SUBCELLULAR LOCATION</scope>
    <source>
        <strain>ATCC 38364 / 968</strain>
    </source>
</reference>
<reference key="3">
    <citation type="journal article" date="2006" name="J. Biol. Chem.">
        <title>Fission yeast homologs of human histone H3 lysine 4 demethylase regulate a common set of genes with diverse functions.</title>
        <authorList>
            <person name="Nicolas E."/>
            <person name="Lee M.G."/>
            <person name="Hakimi M.-A."/>
            <person name="Cam H.P."/>
            <person name="Grewal S.I.S."/>
            <person name="Shiekhattar R."/>
        </authorList>
    </citation>
    <scope>FUNCTION</scope>
    <scope>INTERACTION WITH LSD1</scope>
    <scope>SUBCELLULAR LOCATION</scope>
</reference>
<reference key="4">
    <citation type="journal article" date="2006" name="Nat. Biotechnol.">
        <title>ORFeome cloning and global analysis of protein localization in the fission yeast Schizosaccharomyces pombe.</title>
        <authorList>
            <person name="Matsuyama A."/>
            <person name="Arai R."/>
            <person name="Yashiroda Y."/>
            <person name="Shirai A."/>
            <person name="Kamata A."/>
            <person name="Sekido S."/>
            <person name="Kobayashi Y."/>
            <person name="Hashimoto A."/>
            <person name="Hamamoto M."/>
            <person name="Hiraoka Y."/>
            <person name="Horinouchi S."/>
            <person name="Yoshida M."/>
        </authorList>
    </citation>
    <scope>SUBCELLULAR LOCATION [LARGE SCALE ANALYSIS]</scope>
</reference>
<reference key="5">
    <citation type="journal article" date="2007" name="Mol. Cell">
        <title>S. pombe LSD1 homologs regulate heterochromatin propagation and euchromatic gene transcription.</title>
        <authorList>
            <person name="Lan F."/>
            <person name="Zaratiegui M."/>
            <person name="Villen J."/>
            <person name="Vaughn M.W."/>
            <person name="Verdel A."/>
            <person name="Huarte M."/>
            <person name="Shi Y."/>
            <person name="Gygi S.P."/>
            <person name="Moazed D."/>
            <person name="Martienssen R.A."/>
            <person name="Shi Y."/>
        </authorList>
    </citation>
    <scope>FUNCTION</scope>
    <scope>IDENTIFICATION IN THE SWM HISTONE DEMETHYLASE COMPLEX</scope>
    <scope>INTERACTION WITH LSD1</scope>
</reference>
<reference key="6">
    <citation type="journal article" date="2007" name="PLoS ONE">
        <title>Genome-wide studies of histone demethylation catalysed by the fission yeast homologues of mammalian LSD1.</title>
        <authorList>
            <person name="Opel M."/>
            <person name="Lando D."/>
            <person name="Bonilla C."/>
            <person name="Trewick S.C."/>
            <person name="Boukaba A."/>
            <person name="Walfridsson J."/>
            <person name="Cauwood J."/>
            <person name="Werler P.J."/>
            <person name="Carr A.M."/>
            <person name="Kouzarides T."/>
            <person name="Murzina N.V."/>
            <person name="Allshire R.C."/>
            <person name="Ekwall K."/>
            <person name="Laue E.D."/>
        </authorList>
    </citation>
    <scope>IDENTIFICATION IN THE SWM HISTONE DEMETHYLASE COMPLEX</scope>
    <scope>FUNCTION OF THE SWM COMPLEX</scope>
</reference>